<reference key="1">
    <citation type="journal article" date="1999" name="Nature">
        <title>The DNA sequence of human chromosome 22.</title>
        <authorList>
            <person name="Dunham I."/>
            <person name="Hunt A.R."/>
            <person name="Collins J.E."/>
            <person name="Bruskiewich R."/>
            <person name="Beare D.M."/>
            <person name="Clamp M."/>
            <person name="Smink L.J."/>
            <person name="Ainscough R."/>
            <person name="Almeida J.P."/>
            <person name="Babbage A.K."/>
            <person name="Bagguley C."/>
            <person name="Bailey J."/>
            <person name="Barlow K.F."/>
            <person name="Bates K.N."/>
            <person name="Beasley O.P."/>
            <person name="Bird C.P."/>
            <person name="Blakey S.E."/>
            <person name="Bridgeman A.M."/>
            <person name="Buck D."/>
            <person name="Burgess J."/>
            <person name="Burrill W.D."/>
            <person name="Burton J."/>
            <person name="Carder C."/>
            <person name="Carter N.P."/>
            <person name="Chen Y."/>
            <person name="Clark G."/>
            <person name="Clegg S.M."/>
            <person name="Cobley V.E."/>
            <person name="Cole C.G."/>
            <person name="Collier R.E."/>
            <person name="Connor R."/>
            <person name="Conroy D."/>
            <person name="Corby N.R."/>
            <person name="Coville G.J."/>
            <person name="Cox A.V."/>
            <person name="Davis J."/>
            <person name="Dawson E."/>
            <person name="Dhami P.D."/>
            <person name="Dockree C."/>
            <person name="Dodsworth S.J."/>
            <person name="Durbin R.M."/>
            <person name="Ellington A.G."/>
            <person name="Evans K.L."/>
            <person name="Fey J.M."/>
            <person name="Fleming K."/>
            <person name="French L."/>
            <person name="Garner A.A."/>
            <person name="Gilbert J.G.R."/>
            <person name="Goward M.E."/>
            <person name="Grafham D.V."/>
            <person name="Griffiths M.N.D."/>
            <person name="Hall C."/>
            <person name="Hall R.E."/>
            <person name="Hall-Tamlyn G."/>
            <person name="Heathcott R.W."/>
            <person name="Ho S."/>
            <person name="Holmes S."/>
            <person name="Hunt S.E."/>
            <person name="Jones M.C."/>
            <person name="Kershaw J."/>
            <person name="Kimberley A.M."/>
            <person name="King A."/>
            <person name="Laird G.K."/>
            <person name="Langford C.F."/>
            <person name="Leversha M.A."/>
            <person name="Lloyd C."/>
            <person name="Lloyd D.M."/>
            <person name="Martyn I.D."/>
            <person name="Mashreghi-Mohammadi M."/>
            <person name="Matthews L.H."/>
            <person name="Mccann O.T."/>
            <person name="Mcclay J."/>
            <person name="Mclaren S."/>
            <person name="McMurray A.A."/>
            <person name="Milne S.A."/>
            <person name="Mortimore B.J."/>
            <person name="Odell C.N."/>
            <person name="Pavitt R."/>
            <person name="Pearce A.V."/>
            <person name="Pearson D."/>
            <person name="Phillimore B.J.C.T."/>
            <person name="Phillips S.H."/>
            <person name="Plumb R.W."/>
            <person name="Ramsay H."/>
            <person name="Ramsey Y."/>
            <person name="Rogers L."/>
            <person name="Ross M.T."/>
            <person name="Scott C.E."/>
            <person name="Sehra H.K."/>
            <person name="Skuce C.D."/>
            <person name="Smalley S."/>
            <person name="Smith M.L."/>
            <person name="Soderlund C."/>
            <person name="Spragon L."/>
            <person name="Steward C.A."/>
            <person name="Sulston J.E."/>
            <person name="Swann R.M."/>
            <person name="Vaudin M."/>
            <person name="Wall M."/>
            <person name="Wallis J.M."/>
            <person name="Whiteley M.N."/>
            <person name="Willey D.L."/>
            <person name="Williams L."/>
            <person name="Williams S.A."/>
            <person name="Williamson H."/>
            <person name="Wilmer T.E."/>
            <person name="Wilming L."/>
            <person name="Wright C.L."/>
            <person name="Hubbard T."/>
            <person name="Bentley D.R."/>
            <person name="Beck S."/>
            <person name="Rogers J."/>
            <person name="Shimizu N."/>
            <person name="Minoshima S."/>
            <person name="Kawasaki K."/>
            <person name="Sasaki T."/>
            <person name="Asakawa S."/>
            <person name="Kudoh J."/>
            <person name="Shintani A."/>
            <person name="Shibuya K."/>
            <person name="Yoshizaki Y."/>
            <person name="Aoki N."/>
            <person name="Mitsuyama S."/>
            <person name="Roe B.A."/>
            <person name="Chen F."/>
            <person name="Chu L."/>
            <person name="Crabtree J."/>
            <person name="Deschamps S."/>
            <person name="Do A."/>
            <person name="Do T."/>
            <person name="Dorman A."/>
            <person name="Fang F."/>
            <person name="Fu Y."/>
            <person name="Hu P."/>
            <person name="Hua A."/>
            <person name="Kenton S."/>
            <person name="Lai H."/>
            <person name="Lao H.I."/>
            <person name="Lewis J."/>
            <person name="Lewis S."/>
            <person name="Lin S.-P."/>
            <person name="Loh P."/>
            <person name="Malaj E."/>
            <person name="Nguyen T."/>
            <person name="Pan H."/>
            <person name="Phan S."/>
            <person name="Qi S."/>
            <person name="Qian Y."/>
            <person name="Ray L."/>
            <person name="Ren Q."/>
            <person name="Shaull S."/>
            <person name="Sloan D."/>
            <person name="Song L."/>
            <person name="Wang Q."/>
            <person name="Wang Y."/>
            <person name="Wang Z."/>
            <person name="White J."/>
            <person name="Willingham D."/>
            <person name="Wu H."/>
            <person name="Yao Z."/>
            <person name="Zhan M."/>
            <person name="Zhang G."/>
            <person name="Chissoe S."/>
            <person name="Murray J."/>
            <person name="Miller N."/>
            <person name="Minx P."/>
            <person name="Fulton R."/>
            <person name="Johnson D."/>
            <person name="Bemis G."/>
            <person name="Bentley D."/>
            <person name="Bradshaw H."/>
            <person name="Bourne S."/>
            <person name="Cordes M."/>
            <person name="Du Z."/>
            <person name="Fulton L."/>
            <person name="Goela D."/>
            <person name="Graves T."/>
            <person name="Hawkins J."/>
            <person name="Hinds K."/>
            <person name="Kemp K."/>
            <person name="Latreille P."/>
            <person name="Layman D."/>
            <person name="Ozersky P."/>
            <person name="Rohlfing T."/>
            <person name="Scheet P."/>
            <person name="Walker C."/>
            <person name="Wamsley A."/>
            <person name="Wohldmann P."/>
            <person name="Pepin K."/>
            <person name="Nelson J."/>
            <person name="Korf I."/>
            <person name="Bedell J.A."/>
            <person name="Hillier L.W."/>
            <person name="Mardis E."/>
            <person name="Waterston R."/>
            <person name="Wilson R."/>
            <person name="Emanuel B.S."/>
            <person name="Shaikh T."/>
            <person name="Kurahashi H."/>
            <person name="Saitta S."/>
            <person name="Budarf M.L."/>
            <person name="McDermid H.E."/>
            <person name="Johnson A."/>
            <person name="Wong A.C.C."/>
            <person name="Morrow B.E."/>
            <person name="Edelmann L."/>
            <person name="Kim U.J."/>
            <person name="Shizuya H."/>
            <person name="Simon M.I."/>
            <person name="Dumanski J.P."/>
            <person name="Peyrard M."/>
            <person name="Kedra D."/>
            <person name="Seroussi E."/>
            <person name="Fransson I."/>
            <person name="Tapia I."/>
            <person name="Bruder C.E."/>
            <person name="O'Brien K.P."/>
            <person name="Wilkinson P."/>
            <person name="Bodenteich A."/>
            <person name="Hartman K."/>
            <person name="Hu X."/>
            <person name="Khan A.S."/>
            <person name="Lane L."/>
            <person name="Tilahun Y."/>
            <person name="Wright H."/>
        </authorList>
    </citation>
    <scope>NUCLEOTIDE SEQUENCE [LARGE SCALE GENOMIC DNA] (IMGT ALLELE IGLV2-14*01)</scope>
</reference>
<reference key="2">
    <citation type="journal article" date="1971" name="Hoppe-Seyler's Z. Physiol. Chem.">
        <title>Structural rule of antibodies. Complete primary structure of a monoclonal immunoglobin L chain of the lambda type, subgroup II (Bence Jones protein VIL).</title>
        <authorList>
            <person name="Ponstingl H."/>
            <person name="Hilschmann N."/>
        </authorList>
    </citation>
    <scope>PROTEIN SEQUENCE OF 20-120</scope>
</reference>
<reference key="3">
    <citation type="journal article" date="1979" name="Mol. Immunol.">
        <title>Primary structure of cryo Bence-Jones protein (Tog) from the urine of a patient with IgD myeloma.</title>
        <authorList>
            <person name="Nabeshima Y."/>
            <person name="Ikenaka T."/>
        </authorList>
    </citation>
    <scope>PROTEIN SEQUENCE OF 20-120</scope>
    <scope>PYROGLUTAMATE FORMATION AT GLN-20</scope>
</reference>
<reference key="4">
    <citation type="journal article" date="1985" name="FEBS Lett.">
        <title>Amino acid sequence of an amyloidogenic Bence Jones protein in myeloma-associated systemic amyloidosis.</title>
        <authorList>
            <person name="Tonoike H."/>
            <person name="Kametani F."/>
            <person name="Hoshi A."/>
            <person name="Shinoda T."/>
            <person name="Isobe T."/>
        </authorList>
    </citation>
    <scope>PROTEIN SEQUENCE OF 20-120</scope>
</reference>
<reference key="5">
    <citation type="journal article" date="2001" name="Exp. Clin. Immunogenet.">
        <title>Nomenclature of the human immunoglobulin lambda (IGL) genes.</title>
        <authorList>
            <person name="Lefranc M.P."/>
        </authorList>
    </citation>
    <scope>NOMENCLATURE</scope>
</reference>
<reference key="6">
    <citation type="book" date="2001" name="The Immunoglobulin FactsBook.">
        <title>The Immunoglobulin FactsBook.</title>
        <editorList>
            <person name="Lefranc M.P."/>
            <person name="Lefranc G."/>
        </editorList>
        <authorList>
            <person name="Lefranc M.P."/>
            <person name="Lefranc G."/>
        </authorList>
    </citation>
    <scope>NOMENCLATURE</scope>
</reference>
<reference key="7">
    <citation type="journal article" date="2007" name="Annu. Rev. Genet.">
        <title>Immunoglobulin somatic hypermutation.</title>
        <authorList>
            <person name="Teng G."/>
            <person name="Papavasiliou F.N."/>
        </authorList>
    </citation>
    <scope>REVIEW ON SOMATIC HYPERMUTATION</scope>
</reference>
<reference key="8">
    <citation type="journal article" date="2010" name="J. Allergy Clin. Immunol.">
        <title>Structure and function of immunoglobulins.</title>
        <authorList>
            <person name="Schroeder H.W. Jr."/>
            <person name="Cavacini L."/>
        </authorList>
    </citation>
    <scope>REVIEW ON IMMUNOGLOBULINS</scope>
</reference>
<reference key="9">
    <citation type="journal article" date="2012" name="Nat. Rev. Immunol.">
        <title>Molecular programming of B cell memory.</title>
        <authorList>
            <person name="McHeyzer-Williams M."/>
            <person name="Okitsu S."/>
            <person name="Wang N."/>
            <person name="McHeyzer-Williams L."/>
        </authorList>
    </citation>
    <scope>REVIEW ON FUNCTION</scope>
</reference>
<reference key="10">
    <citation type="journal article" date="2014" name="Front. Immunol.">
        <title>Immunoglobulin and T Cell Receptor Genes: IMGT((R)) and the Birth and Rise of Immunoinformatics.</title>
        <authorList>
            <person name="Lefranc M.P."/>
        </authorList>
    </citation>
    <scope>NOMENCLATURE</scope>
</reference>
<protein>
    <recommendedName>
        <fullName evidence="6 11">Immunoglobulin lambda variable 2-14</fullName>
    </recommendedName>
    <alternativeName>
        <fullName evidence="13">Ig lambda chain V-II region NIG-84</fullName>
    </alternativeName>
    <alternativeName>
        <fullName evidence="14">Ig lambda chain V-II region TOG</fullName>
    </alternativeName>
    <alternativeName>
        <fullName evidence="15">Ig lambda chain V-II region VIL</fullName>
    </alternativeName>
</protein>
<organism>
    <name type="scientific">Homo sapiens</name>
    <name type="common">Human</name>
    <dbReference type="NCBI Taxonomy" id="9606"/>
    <lineage>
        <taxon>Eukaryota</taxon>
        <taxon>Metazoa</taxon>
        <taxon>Chordata</taxon>
        <taxon>Craniata</taxon>
        <taxon>Vertebrata</taxon>
        <taxon>Euteleostomi</taxon>
        <taxon>Mammalia</taxon>
        <taxon>Eutheria</taxon>
        <taxon>Euarchontoglires</taxon>
        <taxon>Primates</taxon>
        <taxon>Haplorrhini</taxon>
        <taxon>Catarrhini</taxon>
        <taxon>Hominidae</taxon>
        <taxon>Homo</taxon>
    </lineage>
</organism>
<feature type="signal peptide" evidence="3 4 5">
    <location>
        <begin position="1"/>
        <end position="19"/>
    </location>
</feature>
<feature type="chain" id="PRO_0000059830" description="Immunoglobulin lambda variable 2-14" evidence="3 4 5">
    <location>
        <begin position="20"/>
        <end position="120"/>
    </location>
</feature>
<feature type="domain" description="Ig-like" evidence="2">
    <location>
        <begin position="20"/>
        <end position="119"/>
    </location>
</feature>
<feature type="region of interest" description="Framework-1" evidence="1">
    <location>
        <begin position="20"/>
        <end position="44"/>
    </location>
</feature>
<feature type="region of interest" description="Complementarity-determining-1" evidence="1">
    <location>
        <begin position="45"/>
        <end position="53"/>
    </location>
</feature>
<feature type="region of interest" description="Framework-2" evidence="1">
    <location>
        <begin position="54"/>
        <end position="70"/>
    </location>
</feature>
<feature type="region of interest" description="Complementarity-determining-2" evidence="1">
    <location>
        <begin position="71"/>
        <end position="73"/>
    </location>
</feature>
<feature type="region of interest" description="Framework-3" evidence="1">
    <location>
        <begin position="74"/>
        <end position="109"/>
    </location>
</feature>
<feature type="region of interest" description="Complementarity-determining-3" evidence="1">
    <location>
        <begin position="110"/>
        <end position="119"/>
    </location>
</feature>
<feature type="modified residue" description="Pyrrolidone carboxylic acid" evidence="4">
    <location>
        <position position="20"/>
    </location>
</feature>
<feature type="disulfide bond" evidence="2">
    <location>
        <begin position="41"/>
        <end position="109"/>
    </location>
</feature>
<feature type="sequence conflict" description="In Ref. 2; AA sequence." evidence="12" ref="2">
    <original>Q</original>
    <variation>H</variation>
    <location>
        <position position="20"/>
    </location>
</feature>
<feature type="sequence conflict" description="In Ref. 3; AA sequence." evidence="12" ref="3">
    <original>G</original>
    <variation>A</variation>
    <location>
        <position position="31"/>
    </location>
</feature>
<feature type="sequence conflict" description="In Ref. 2; AA sequence." evidence="12" ref="2">
    <original>P</original>
    <variation>L</variation>
    <location>
        <position position="33"/>
    </location>
</feature>
<feature type="sequence conflict" description="In Ref. 3; AA sequence." evidence="12" ref="3">
    <original>SSDVGGYN</original>
    <variation>TNDIGSYS</variation>
    <location>
        <begin position="45"/>
        <end position="52"/>
    </location>
</feature>
<feature type="sequence conflict" description="In Ref. 4; AA sequence." evidence="12" ref="4">
    <original>S</original>
    <variation>T</variation>
    <location>
        <position position="45"/>
    </location>
</feature>
<feature type="sequence conflict" description="In Ref. 4; AA sequence." evidence="12" ref="4">
    <original>NY</original>
    <variation>DF</variation>
    <location>
        <begin position="52"/>
        <end position="53"/>
    </location>
</feature>
<feature type="sequence conflict" description="In Ref. 2; AA sequence." evidence="12" ref="2">
    <original>Y</original>
    <variation>F</variation>
    <location>
        <position position="57"/>
    </location>
</feature>
<feature type="sequence conflict" description="In Ref. 3; AA sequence." evidence="12" ref="3">
    <original>H</original>
    <variation>Y</variation>
    <location>
        <position position="60"/>
    </location>
</feature>
<feature type="sequence conflict" description="In Ref. 2; AA sequence." evidence="12" ref="2">
    <original>K</original>
    <variation>T</variation>
    <location>
        <position position="63"/>
    </location>
</feature>
<feature type="sequence conflict" description="In Ref. 3; AA sequence." evidence="12" ref="3">
    <original>LMIYEVSN</original>
    <variation>VLIFDVNS</variation>
    <location>
        <begin position="67"/>
        <end position="74"/>
    </location>
</feature>
<feature type="sequence conflict" description="In Ref. 2; AA sequence." evidence="12" ref="2">
    <original>MIY</original>
    <variation>IIS</variation>
    <location>
        <begin position="68"/>
        <end position="70"/>
    </location>
</feature>
<feature type="sequence conflict" description="In Ref. 4; AA sequence." evidence="12" ref="4">
    <original>M</original>
    <variation>L</variation>
    <location>
        <position position="68"/>
    </location>
</feature>
<feature type="sequence conflict" description="In Ref. 4; AA sequence." evidence="12" ref="4">
    <original>EVSN</original>
    <variation>DVNS</variation>
    <location>
        <begin position="71"/>
        <end position="74"/>
    </location>
</feature>
<feature type="sequence conflict" description="In Ref. 2; AA sequence." evidence="12" ref="2">
    <original>S</original>
    <variation>R</variation>
    <location>
        <position position="73"/>
    </location>
</feature>
<feature type="sequence conflict" description="In Ref. 4; AA sequence." evidence="12" ref="4">
    <original>V</original>
    <variation>I</variation>
    <location>
        <position position="79"/>
    </location>
</feature>
<feature type="sequence conflict" description="In Ref. 2; AA sequence." evidence="12" ref="2">
    <original>N</original>
    <variation>D</variation>
    <location>
        <position position="81"/>
    </location>
</feature>
<feature type="sequence conflict" description="In Ref. 3; AA sequence." evidence="12" ref="3">
    <original>N</original>
    <variation>H</variation>
    <location>
        <position position="81"/>
    </location>
</feature>
<feature type="sequence conflict" description="In Ref. 2; AA sequence." evidence="12" ref="2">
    <original>G</original>
    <variation>A</variation>
    <location>
        <position position="89"/>
    </location>
</feature>
<feature type="sequence conflict" description="In Ref. 3; AA sequence." evidence="12" ref="3">
    <original>DYY</original>
    <variation>HYF</variation>
    <location>
        <begin position="106"/>
        <end position="108"/>
    </location>
</feature>
<feature type="sequence conflict" description="In Ref. 4; AA sequence." evidence="12" ref="4">
    <original>YTSSSTLHS</original>
    <variation>FTTTNSRAV</variation>
    <location>
        <begin position="112"/>
        <end position="120"/>
    </location>
</feature>
<feature type="sequence conflict" description="In Ref. 3; AA sequence." evidence="12" ref="3">
    <original>TSSSTLHS</original>
    <variation>RTSGTIIF</variation>
    <location>
        <begin position="113"/>
        <end position="120"/>
    </location>
</feature>
<feature type="sequence conflict" description="In Ref. 2; AA sequence." evidence="12" ref="2">
    <original>STLHS</original>
    <variation>NSVVF</variation>
    <location>
        <begin position="116"/>
        <end position="120"/>
    </location>
</feature>
<feature type="non-terminal residue">
    <location>
        <position position="120"/>
    </location>
</feature>
<feature type="strand" evidence="16">
    <location>
        <begin position="27"/>
        <end position="31"/>
    </location>
</feature>
<feature type="strand" evidence="16">
    <location>
        <begin position="37"/>
        <end position="42"/>
    </location>
</feature>
<feature type="turn" evidence="16">
    <location>
        <begin position="45"/>
        <end position="50"/>
    </location>
</feature>
<feature type="strand" evidence="16">
    <location>
        <begin position="54"/>
        <end position="59"/>
    </location>
</feature>
<feature type="strand" evidence="16">
    <location>
        <begin position="66"/>
        <end position="70"/>
    </location>
</feature>
<feature type="turn" evidence="16">
    <location>
        <begin position="71"/>
        <end position="73"/>
    </location>
</feature>
<feature type="strand" evidence="16">
    <location>
        <begin position="83"/>
        <end position="88"/>
    </location>
</feature>
<feature type="strand" evidence="16">
    <location>
        <begin position="91"/>
        <end position="96"/>
    </location>
</feature>
<feature type="helix" evidence="16">
    <location>
        <begin position="101"/>
        <end position="103"/>
    </location>
</feature>
<feature type="strand" evidence="16">
    <location>
        <begin position="105"/>
        <end position="112"/>
    </location>
</feature>
<gene>
    <name evidence="6 11" type="primary">IGLV2-14</name>
</gene>
<keyword id="KW-0002">3D-structure</keyword>
<keyword id="KW-1064">Adaptive immunity</keyword>
<keyword id="KW-1003">Cell membrane</keyword>
<keyword id="KW-0903">Direct protein sequencing</keyword>
<keyword id="KW-1015">Disulfide bond</keyword>
<keyword id="KW-0391">Immunity</keyword>
<keyword id="KW-1280">Immunoglobulin</keyword>
<keyword id="KW-0393">Immunoglobulin domain</keyword>
<keyword id="KW-0472">Membrane</keyword>
<keyword id="KW-1267">Proteomics identification</keyword>
<keyword id="KW-0873">Pyrrolidone carboxylic acid</keyword>
<keyword id="KW-1185">Reference proteome</keyword>
<keyword id="KW-0964">Secreted</keyword>
<keyword id="KW-0732">Signal</keyword>
<comment type="function">
    <text evidence="7 8 9 10">V region of the variable domain of immunoglobulin light chains that participates in the antigen recognition (PubMed:24600447). Immunoglobulins, also known as antibodies, are membrane-bound or secreted glycoproteins produced by B lymphocytes. In the recognition phase of humoral immunity, the membrane-bound immunoglobulins serve as receptors which, upon binding of a specific antigen, trigger the clonal expansion and differentiation of B lymphocytes into immunoglobulins-secreting plasma cells. Secreted immunoglobulins mediate the effector phase of humoral immunity, which results in the elimination of bound antigens (PubMed:20176268, PubMed:22158414). The antigen binding site is formed by the variable domain of one heavy chain, together with that of its associated light chain. Thus, each immunoglobulin has two antigen binding sites with remarkable affinity for a particular antigen. The variable domains are assembled by a process called V-(D)-J rearrangement and can then be subjected to somatic hypermutations which, after exposure to antigen and selection, allow affinity maturation for a particular antigen (PubMed:17576170, PubMed:20176268).</text>
</comment>
<comment type="subunit">
    <text evidence="8">Immunoglobulins are composed of two identical heavy chains and two identical light chains; disulfide-linked.</text>
</comment>
<comment type="subcellular location">
    <subcellularLocation>
        <location evidence="8 9">Secreted</location>
    </subcellularLocation>
    <subcellularLocation>
        <location evidence="8 9">Cell membrane</location>
    </subcellularLocation>
</comment>
<comment type="polymorphism">
    <text>There are several alleles. The sequence shown is that of IMGT allele IGLV2-14*01.</text>
</comment>
<comment type="caution">
    <text evidence="12">For an example of a full-length immunoglobulin lambda light chain see AC P0DOX8.</text>
</comment>
<proteinExistence type="evidence at protein level"/>
<dbReference type="EMBL" id="AC244250">
    <property type="status" value="NOT_ANNOTATED_CDS"/>
    <property type="molecule type" value="Genomic_DNA"/>
</dbReference>
<dbReference type="PIR" id="A01969">
    <property type="entry name" value="L2HUTG"/>
</dbReference>
<dbReference type="PIR" id="A01971">
    <property type="entry name" value="L2HUNG"/>
</dbReference>
<dbReference type="PIR" id="A01977">
    <property type="entry name" value="L2HUVL"/>
</dbReference>
<dbReference type="PDB" id="5C2B">
    <property type="method" value="X-ray"/>
    <property type="resolution" value="1.40 A"/>
    <property type="chains" value="L=20-111"/>
</dbReference>
<dbReference type="PDB" id="5C6W">
    <property type="method" value="X-ray"/>
    <property type="resolution" value="1.54 A"/>
    <property type="chains" value="H/J=20-120"/>
</dbReference>
<dbReference type="PDB" id="5CBA">
    <property type="method" value="X-ray"/>
    <property type="resolution" value="2.50 A"/>
    <property type="chains" value="B/D=20-111"/>
</dbReference>
<dbReference type="PDB" id="5CBE">
    <property type="method" value="X-ray"/>
    <property type="resolution" value="2.40 A"/>
    <property type="chains" value="B/D=20-109"/>
</dbReference>
<dbReference type="PDB" id="6SM1">
    <property type="method" value="X-ray"/>
    <property type="resolution" value="1.55 A"/>
    <property type="chains" value="A=20-118"/>
</dbReference>
<dbReference type="PDBsum" id="5C2B"/>
<dbReference type="PDBsum" id="5C6W"/>
<dbReference type="PDBsum" id="5CBA"/>
<dbReference type="PDBsum" id="5CBE"/>
<dbReference type="PDBsum" id="6SM1"/>
<dbReference type="EMDB" id="EMD-23165"/>
<dbReference type="EMDB" id="EMD-23578"/>
<dbReference type="EMDB" id="EMD-23580"/>
<dbReference type="EMDB" id="EMD-34128"/>
<dbReference type="EMDB" id="EMD-34129"/>
<dbReference type="SMR" id="P01704"/>
<dbReference type="FunCoup" id="P01704">
    <property type="interactions" value="397"/>
</dbReference>
<dbReference type="IMGT_GENE-DB" id="IGLV2-14"/>
<dbReference type="BioMuta" id="IGLV2-14"/>
<dbReference type="DMDM" id="126552"/>
<dbReference type="jPOST" id="P01704"/>
<dbReference type="MassIVE" id="P01704"/>
<dbReference type="Ensembl" id="ENST00000390312.2">
    <property type="protein sequence ID" value="ENSP00000374847.2"/>
    <property type="gene ID" value="ENSG00000211666.2"/>
</dbReference>
<dbReference type="AGR" id="HGNC:5888"/>
<dbReference type="GeneCards" id="IGLV2-14"/>
<dbReference type="HGNC" id="HGNC:5888">
    <property type="gene designation" value="IGLV2-14"/>
</dbReference>
<dbReference type="HPA" id="ENSG00000211666">
    <property type="expression patterns" value="Tissue enhanced (intestine, lymphoid tissue, stomach)"/>
</dbReference>
<dbReference type="neXtProt" id="NX_P01704"/>
<dbReference type="OpenTargets" id="ENSG00000211666"/>
<dbReference type="VEuPathDB" id="HostDB:ENSG00000211666"/>
<dbReference type="GeneTree" id="ENSGT00940000154179"/>
<dbReference type="InParanoid" id="P01704"/>
<dbReference type="OMA" id="CKSAHNT"/>
<dbReference type="OrthoDB" id="8908372at2759"/>
<dbReference type="PAN-GO" id="P01704">
    <property type="GO annotations" value="3 GO annotations based on evolutionary models"/>
</dbReference>
<dbReference type="PhylomeDB" id="P01704"/>
<dbReference type="PathwayCommons" id="P01704"/>
<dbReference type="Reactome" id="R-HSA-166663">
    <property type="pathway name" value="Initial triggering of complement"/>
</dbReference>
<dbReference type="Reactome" id="R-HSA-173623">
    <property type="pathway name" value="Classical antibody-mediated complement activation"/>
</dbReference>
<dbReference type="Reactome" id="R-HSA-198933">
    <property type="pathway name" value="Immunoregulatory interactions between a Lymphoid and a non-Lymphoid cell"/>
</dbReference>
<dbReference type="Reactome" id="R-HSA-202733">
    <property type="pathway name" value="Cell surface interactions at the vascular wall"/>
</dbReference>
<dbReference type="Reactome" id="R-HSA-2029481">
    <property type="pathway name" value="FCGR activation"/>
</dbReference>
<dbReference type="Reactome" id="R-HSA-2029482">
    <property type="pathway name" value="Regulation of actin dynamics for phagocytic cup formation"/>
</dbReference>
<dbReference type="Reactome" id="R-HSA-2029485">
    <property type="pathway name" value="Role of phospholipids in phagocytosis"/>
</dbReference>
<dbReference type="Reactome" id="R-HSA-2168880">
    <property type="pathway name" value="Scavenging of heme from plasma"/>
</dbReference>
<dbReference type="Reactome" id="R-HSA-2454202">
    <property type="pathway name" value="Fc epsilon receptor (FCERI) signaling"/>
</dbReference>
<dbReference type="Reactome" id="R-HSA-2730905">
    <property type="pathway name" value="Role of LAT2/NTAL/LAB on calcium mobilization"/>
</dbReference>
<dbReference type="Reactome" id="R-HSA-2871796">
    <property type="pathway name" value="FCERI mediated MAPK activation"/>
</dbReference>
<dbReference type="Reactome" id="R-HSA-2871809">
    <property type="pathway name" value="FCERI mediated Ca+2 mobilization"/>
</dbReference>
<dbReference type="Reactome" id="R-HSA-2871837">
    <property type="pathway name" value="FCERI mediated NF-kB activation"/>
</dbReference>
<dbReference type="Reactome" id="R-HSA-5690714">
    <property type="pathway name" value="CD22 mediated BCR regulation"/>
</dbReference>
<dbReference type="Reactome" id="R-HSA-9664323">
    <property type="pathway name" value="FCGR3A-mediated IL10 synthesis"/>
</dbReference>
<dbReference type="Reactome" id="R-HSA-9664422">
    <property type="pathway name" value="FCGR3A-mediated phagocytosis"/>
</dbReference>
<dbReference type="Reactome" id="R-HSA-9679191">
    <property type="pathway name" value="Potential therapeutics for SARS"/>
</dbReference>
<dbReference type="Reactome" id="R-HSA-977606">
    <property type="pathway name" value="Regulation of Complement cascade"/>
</dbReference>
<dbReference type="Reactome" id="R-HSA-983695">
    <property type="pathway name" value="Antigen activates B Cell Receptor (BCR) leading to generation of second messengers"/>
</dbReference>
<dbReference type="ChiTaRS" id="IGLV2-14">
    <property type="organism name" value="human"/>
</dbReference>
<dbReference type="EvolutionaryTrace" id="P01704"/>
<dbReference type="Pharos" id="P01704">
    <property type="development level" value="Tdark"/>
</dbReference>
<dbReference type="PRO" id="PR:P01704"/>
<dbReference type="Proteomes" id="UP000005640">
    <property type="component" value="Chromosome 22"/>
</dbReference>
<dbReference type="RNAct" id="P01704">
    <property type="molecule type" value="protein"/>
</dbReference>
<dbReference type="Bgee" id="ENSG00000211666">
    <property type="expression patterns" value="Expressed in duodenum and 96 other cell types or tissues"/>
</dbReference>
<dbReference type="GO" id="GO:0070062">
    <property type="term" value="C:extracellular exosome"/>
    <property type="evidence" value="ECO:0007005"/>
    <property type="project" value="UniProtKB"/>
</dbReference>
<dbReference type="GO" id="GO:0005576">
    <property type="term" value="C:extracellular region"/>
    <property type="evidence" value="ECO:0000304"/>
    <property type="project" value="Reactome"/>
</dbReference>
<dbReference type="GO" id="GO:0019814">
    <property type="term" value="C:immunoglobulin complex"/>
    <property type="evidence" value="ECO:0000318"/>
    <property type="project" value="GO_Central"/>
</dbReference>
<dbReference type="GO" id="GO:0005886">
    <property type="term" value="C:plasma membrane"/>
    <property type="evidence" value="ECO:0000304"/>
    <property type="project" value="Reactome"/>
</dbReference>
<dbReference type="GO" id="GO:0003823">
    <property type="term" value="F:antigen binding"/>
    <property type="evidence" value="ECO:0000303"/>
    <property type="project" value="UniProtKB"/>
</dbReference>
<dbReference type="GO" id="GO:0002250">
    <property type="term" value="P:adaptive immune response"/>
    <property type="evidence" value="ECO:0007669"/>
    <property type="project" value="UniProtKB-KW"/>
</dbReference>
<dbReference type="GO" id="GO:0006955">
    <property type="term" value="P:immune response"/>
    <property type="evidence" value="ECO:0000318"/>
    <property type="project" value="GO_Central"/>
</dbReference>
<dbReference type="FunFam" id="2.60.40.10:FF:000442">
    <property type="entry name" value="Immunoglobulin lambda variable 2-8"/>
    <property type="match status" value="1"/>
</dbReference>
<dbReference type="Gene3D" id="2.60.40.10">
    <property type="entry name" value="Immunoglobulins"/>
    <property type="match status" value="1"/>
</dbReference>
<dbReference type="InterPro" id="IPR007110">
    <property type="entry name" value="Ig-like_dom"/>
</dbReference>
<dbReference type="InterPro" id="IPR036179">
    <property type="entry name" value="Ig-like_dom_sf"/>
</dbReference>
<dbReference type="InterPro" id="IPR013783">
    <property type="entry name" value="Ig-like_fold"/>
</dbReference>
<dbReference type="InterPro" id="IPR003599">
    <property type="entry name" value="Ig_sub"/>
</dbReference>
<dbReference type="InterPro" id="IPR013106">
    <property type="entry name" value="Ig_V-set"/>
</dbReference>
<dbReference type="InterPro" id="IPR050150">
    <property type="entry name" value="IgV_Light_Chain"/>
</dbReference>
<dbReference type="PANTHER" id="PTHR23267">
    <property type="entry name" value="IMMUNOGLOBULIN LIGHT CHAIN"/>
    <property type="match status" value="1"/>
</dbReference>
<dbReference type="Pfam" id="PF07686">
    <property type="entry name" value="V-set"/>
    <property type="match status" value="1"/>
</dbReference>
<dbReference type="SMART" id="SM00409">
    <property type="entry name" value="IG"/>
    <property type="match status" value="1"/>
</dbReference>
<dbReference type="SMART" id="SM00406">
    <property type="entry name" value="IGv"/>
    <property type="match status" value="1"/>
</dbReference>
<dbReference type="SUPFAM" id="SSF48726">
    <property type="entry name" value="Immunoglobulin"/>
    <property type="match status" value="1"/>
</dbReference>
<dbReference type="PROSITE" id="PS50835">
    <property type="entry name" value="IG_LIKE"/>
    <property type="match status" value="1"/>
</dbReference>
<evidence type="ECO:0000250" key="1">
    <source>
        <dbReference type="UniProtKB" id="P01721"/>
    </source>
</evidence>
<evidence type="ECO:0000255" key="2">
    <source>
        <dbReference type="PROSITE-ProRule" id="PRU00114"/>
    </source>
</evidence>
<evidence type="ECO:0000269" key="3">
    <source>
    </source>
</evidence>
<evidence type="ECO:0000269" key="4">
    <source>
    </source>
</evidence>
<evidence type="ECO:0000269" key="5">
    <source>
    </source>
</evidence>
<evidence type="ECO:0000303" key="6">
    <source>
    </source>
</evidence>
<evidence type="ECO:0000303" key="7">
    <source>
    </source>
</evidence>
<evidence type="ECO:0000303" key="8">
    <source>
    </source>
</evidence>
<evidence type="ECO:0000303" key="9">
    <source>
    </source>
</evidence>
<evidence type="ECO:0000303" key="10">
    <source>
    </source>
</evidence>
<evidence type="ECO:0000303" key="11">
    <source ref="6"/>
</evidence>
<evidence type="ECO:0000305" key="12"/>
<evidence type="ECO:0000305" key="13">
    <source>
    </source>
</evidence>
<evidence type="ECO:0000305" key="14">
    <source>
    </source>
</evidence>
<evidence type="ECO:0000305" key="15">
    <source>
    </source>
</evidence>
<evidence type="ECO:0007829" key="16">
    <source>
        <dbReference type="PDB" id="5C6W"/>
    </source>
</evidence>
<accession>P01704</accession>
<accession>A0A075B6K1</accession>
<accession>P01711</accession>
<accession>P04209</accession>
<name>LV214_HUMAN</name>
<sequence>MAWALLLLTLLTQGTGSWAQSALTQPASVSGSPGQSITISCTGTSSDVGGYNYVSWYQQHPGKAPKLMIYEVSNRPSGVSNRFSGSKSGNTASLTISGLQAEDEADYYCSSYTSSSTLHS</sequence>